<comment type="function">
    <text evidence="1">Bidirectionally degrades single-stranded DNA into large acid-insoluble oligonucleotides, which are then degraded further into small acid-soluble oligonucleotides.</text>
</comment>
<comment type="catalytic activity">
    <reaction evidence="1">
        <text>Exonucleolytic cleavage in either 5'- to 3'- or 3'- to 5'-direction to yield nucleoside 5'-phosphates.</text>
        <dbReference type="EC" id="3.1.11.6"/>
    </reaction>
</comment>
<comment type="subunit">
    <text evidence="1">Heterooligomer composed of large and small subunits.</text>
</comment>
<comment type="subcellular location">
    <subcellularLocation>
        <location evidence="1">Cytoplasm</location>
    </subcellularLocation>
</comment>
<comment type="similarity">
    <text evidence="1">Belongs to the XseA family.</text>
</comment>
<keyword id="KW-0963">Cytoplasm</keyword>
<keyword id="KW-0269">Exonuclease</keyword>
<keyword id="KW-0378">Hydrolase</keyword>
<keyword id="KW-0540">Nuclease</keyword>
<keyword id="KW-1185">Reference proteome</keyword>
<gene>
    <name evidence="1" type="primary">xseA</name>
    <name type="ordered locus">BH2783</name>
</gene>
<sequence length="458" mass="52595">MAGHQPILTVSEVTRHLKRTIEDDPLLQDVWMRGEISNFKHHSRGHMYFTLKDEHAKMSAVMFAGNNRFLNFKPENGMKVIVRGEVNVYEPFGQYQLYALEMQPDGIGNLYLAYEQLKERLEQEGLFKEENKKPLPPVARQIAIVTSPTGAAIRDIASTIKRRFPVAQLTLLPVLVQGEEAPHSIAKAIRQANEVGGFDLLIVGRGGGSIEELWAFNEELVARAIYQSVIPIISAVGHETDYTIADFVADVRAATPTGAAELAVPDLKELISRVNQYTERLKRAQHELLKRQKEHLQRLQKSYAFRYPAQLVKQKELELDQQLERLTKHQRRMVSDAKDRLSQLEYRLKRIHPEGRLRQAEQARVKLEVLLKKEFQQMMERKEQQFQQAISSLNLLSPLRVMERGYALPYKAKTQELIKSVKQVRMNDRLHLRVTDGQLICDVKEIESESGGEGYDQK</sequence>
<accession>Q9K967</accession>
<reference key="1">
    <citation type="journal article" date="2000" name="Nucleic Acids Res.">
        <title>Complete genome sequence of the alkaliphilic bacterium Bacillus halodurans and genomic sequence comparison with Bacillus subtilis.</title>
        <authorList>
            <person name="Takami H."/>
            <person name="Nakasone K."/>
            <person name="Takaki Y."/>
            <person name="Maeno G."/>
            <person name="Sasaki R."/>
            <person name="Masui N."/>
            <person name="Fuji F."/>
            <person name="Hirama C."/>
            <person name="Nakamura Y."/>
            <person name="Ogasawara N."/>
            <person name="Kuhara S."/>
            <person name="Horikoshi K."/>
        </authorList>
    </citation>
    <scope>NUCLEOTIDE SEQUENCE [LARGE SCALE GENOMIC DNA]</scope>
    <source>
        <strain>ATCC BAA-125 / DSM 18197 / FERM 7344 / JCM 9153 / C-125</strain>
    </source>
</reference>
<protein>
    <recommendedName>
        <fullName evidence="1">Exodeoxyribonuclease 7 large subunit</fullName>
        <ecNumber evidence="1">3.1.11.6</ecNumber>
    </recommendedName>
    <alternativeName>
        <fullName evidence="1">Exodeoxyribonuclease VII large subunit</fullName>
        <shortName evidence="1">Exonuclease VII large subunit</shortName>
    </alternativeName>
</protein>
<evidence type="ECO:0000255" key="1">
    <source>
        <dbReference type="HAMAP-Rule" id="MF_00378"/>
    </source>
</evidence>
<name>EX7L_HALH5</name>
<dbReference type="EC" id="3.1.11.6" evidence="1"/>
<dbReference type="EMBL" id="BA000004">
    <property type="protein sequence ID" value="BAB06502.1"/>
    <property type="molecule type" value="Genomic_DNA"/>
</dbReference>
<dbReference type="PIR" id="G83997">
    <property type="entry name" value="G83997"/>
</dbReference>
<dbReference type="RefSeq" id="WP_010898931.1">
    <property type="nucleotide sequence ID" value="NC_002570.2"/>
</dbReference>
<dbReference type="SMR" id="Q9K967"/>
<dbReference type="STRING" id="272558.gene:10728683"/>
<dbReference type="KEGG" id="bha:BH2783"/>
<dbReference type="eggNOG" id="COG1570">
    <property type="taxonomic scope" value="Bacteria"/>
</dbReference>
<dbReference type="HOGENOM" id="CLU_023625_3_1_9"/>
<dbReference type="OrthoDB" id="9802795at2"/>
<dbReference type="Proteomes" id="UP000001258">
    <property type="component" value="Chromosome"/>
</dbReference>
<dbReference type="GO" id="GO:0005737">
    <property type="term" value="C:cytoplasm"/>
    <property type="evidence" value="ECO:0007669"/>
    <property type="project" value="UniProtKB-SubCell"/>
</dbReference>
<dbReference type="GO" id="GO:0009318">
    <property type="term" value="C:exodeoxyribonuclease VII complex"/>
    <property type="evidence" value="ECO:0007669"/>
    <property type="project" value="InterPro"/>
</dbReference>
<dbReference type="GO" id="GO:0008855">
    <property type="term" value="F:exodeoxyribonuclease VII activity"/>
    <property type="evidence" value="ECO:0007669"/>
    <property type="project" value="UniProtKB-UniRule"/>
</dbReference>
<dbReference type="GO" id="GO:0003676">
    <property type="term" value="F:nucleic acid binding"/>
    <property type="evidence" value="ECO:0007669"/>
    <property type="project" value="InterPro"/>
</dbReference>
<dbReference type="GO" id="GO:0006308">
    <property type="term" value="P:DNA catabolic process"/>
    <property type="evidence" value="ECO:0007669"/>
    <property type="project" value="UniProtKB-UniRule"/>
</dbReference>
<dbReference type="CDD" id="cd04489">
    <property type="entry name" value="ExoVII_LU_OBF"/>
    <property type="match status" value="1"/>
</dbReference>
<dbReference type="HAMAP" id="MF_00378">
    <property type="entry name" value="Exonuc_7_L"/>
    <property type="match status" value="1"/>
</dbReference>
<dbReference type="InterPro" id="IPR003753">
    <property type="entry name" value="Exonuc_VII_L"/>
</dbReference>
<dbReference type="InterPro" id="IPR020579">
    <property type="entry name" value="Exonuc_VII_lsu_C"/>
</dbReference>
<dbReference type="InterPro" id="IPR025824">
    <property type="entry name" value="OB-fold_nuc-bd_dom"/>
</dbReference>
<dbReference type="NCBIfam" id="TIGR00237">
    <property type="entry name" value="xseA"/>
    <property type="match status" value="1"/>
</dbReference>
<dbReference type="PANTHER" id="PTHR30008">
    <property type="entry name" value="EXODEOXYRIBONUCLEASE 7 LARGE SUBUNIT"/>
    <property type="match status" value="1"/>
</dbReference>
<dbReference type="PANTHER" id="PTHR30008:SF0">
    <property type="entry name" value="EXODEOXYRIBONUCLEASE 7 LARGE SUBUNIT"/>
    <property type="match status" value="1"/>
</dbReference>
<dbReference type="Pfam" id="PF02601">
    <property type="entry name" value="Exonuc_VII_L"/>
    <property type="match status" value="1"/>
</dbReference>
<dbReference type="Pfam" id="PF13742">
    <property type="entry name" value="tRNA_anti_2"/>
    <property type="match status" value="1"/>
</dbReference>
<feature type="chain" id="PRO_0000197827" description="Exodeoxyribonuclease 7 large subunit">
    <location>
        <begin position="1"/>
        <end position="458"/>
    </location>
</feature>
<proteinExistence type="inferred from homology"/>
<organism>
    <name type="scientific">Halalkalibacterium halodurans (strain ATCC BAA-125 / DSM 18197 / FERM 7344 / JCM 9153 / C-125)</name>
    <name type="common">Bacillus halodurans</name>
    <dbReference type="NCBI Taxonomy" id="272558"/>
    <lineage>
        <taxon>Bacteria</taxon>
        <taxon>Bacillati</taxon>
        <taxon>Bacillota</taxon>
        <taxon>Bacilli</taxon>
        <taxon>Bacillales</taxon>
        <taxon>Bacillaceae</taxon>
        <taxon>Halalkalibacterium (ex Joshi et al. 2022)</taxon>
    </lineage>
</organism>